<gene>
    <name evidence="1" type="primary">rbfA</name>
    <name type="ordered locus">Strop_1372</name>
</gene>
<protein>
    <recommendedName>
        <fullName evidence="1">Ribosome-binding factor A</fullName>
    </recommendedName>
</protein>
<comment type="function">
    <text evidence="1">One of several proteins that assist in the late maturation steps of the functional core of the 30S ribosomal subunit. Associates with free 30S ribosomal subunits (but not with 30S subunits that are part of 70S ribosomes or polysomes). Required for efficient processing of 16S rRNA. May interact with the 5'-terminal helix region of 16S rRNA.</text>
</comment>
<comment type="subunit">
    <text evidence="1">Monomer. Binds 30S ribosomal subunits, but not 50S ribosomal subunits or 70S ribosomes.</text>
</comment>
<comment type="subcellular location">
    <subcellularLocation>
        <location evidence="1">Cytoplasm</location>
    </subcellularLocation>
</comment>
<comment type="similarity">
    <text evidence="1">Belongs to the RbfA family.</text>
</comment>
<proteinExistence type="inferred from homology"/>
<sequence>MSDPAKVRRHAERVRELVASVVRSQIKDPRLGMITITDARITADLRDATVFYTVLGDASAQASTAAALESAKGMVRSTVGKALGLRHSPTLTFVLDDVQDQVKHIDDLLAQARHADAEVQRLATRAEYAGEAQPYRLEEEPEGSGDEVPPPGGDQR</sequence>
<dbReference type="EMBL" id="CP000667">
    <property type="protein sequence ID" value="ABP53839.1"/>
    <property type="molecule type" value="Genomic_DNA"/>
</dbReference>
<dbReference type="RefSeq" id="WP_011905271.1">
    <property type="nucleotide sequence ID" value="NC_009380.1"/>
</dbReference>
<dbReference type="SMR" id="A4X4N9"/>
<dbReference type="STRING" id="369723.Strop_1372"/>
<dbReference type="KEGG" id="stp:Strop_1372"/>
<dbReference type="PATRIC" id="fig|369723.5.peg.1398"/>
<dbReference type="eggNOG" id="COG0858">
    <property type="taxonomic scope" value="Bacteria"/>
</dbReference>
<dbReference type="HOGENOM" id="CLU_089475_0_0_11"/>
<dbReference type="Proteomes" id="UP000000235">
    <property type="component" value="Chromosome"/>
</dbReference>
<dbReference type="GO" id="GO:0005829">
    <property type="term" value="C:cytosol"/>
    <property type="evidence" value="ECO:0007669"/>
    <property type="project" value="TreeGrafter"/>
</dbReference>
<dbReference type="GO" id="GO:0043024">
    <property type="term" value="F:ribosomal small subunit binding"/>
    <property type="evidence" value="ECO:0007669"/>
    <property type="project" value="TreeGrafter"/>
</dbReference>
<dbReference type="GO" id="GO:0030490">
    <property type="term" value="P:maturation of SSU-rRNA"/>
    <property type="evidence" value="ECO:0007669"/>
    <property type="project" value="UniProtKB-UniRule"/>
</dbReference>
<dbReference type="Gene3D" id="3.30.300.20">
    <property type="match status" value="1"/>
</dbReference>
<dbReference type="HAMAP" id="MF_00003">
    <property type="entry name" value="RbfA"/>
    <property type="match status" value="1"/>
</dbReference>
<dbReference type="InterPro" id="IPR015946">
    <property type="entry name" value="KH_dom-like_a/b"/>
</dbReference>
<dbReference type="InterPro" id="IPR000238">
    <property type="entry name" value="RbfA"/>
</dbReference>
<dbReference type="InterPro" id="IPR023799">
    <property type="entry name" value="RbfA_dom_sf"/>
</dbReference>
<dbReference type="InterPro" id="IPR020053">
    <property type="entry name" value="Ribosome-bd_factorA_CS"/>
</dbReference>
<dbReference type="NCBIfam" id="TIGR00082">
    <property type="entry name" value="rbfA"/>
    <property type="match status" value="1"/>
</dbReference>
<dbReference type="PANTHER" id="PTHR33515">
    <property type="entry name" value="RIBOSOME-BINDING FACTOR A, CHLOROPLASTIC-RELATED"/>
    <property type="match status" value="1"/>
</dbReference>
<dbReference type="PANTHER" id="PTHR33515:SF1">
    <property type="entry name" value="RIBOSOME-BINDING FACTOR A, CHLOROPLASTIC-RELATED"/>
    <property type="match status" value="1"/>
</dbReference>
<dbReference type="Pfam" id="PF02033">
    <property type="entry name" value="RBFA"/>
    <property type="match status" value="1"/>
</dbReference>
<dbReference type="SUPFAM" id="SSF89919">
    <property type="entry name" value="Ribosome-binding factor A, RbfA"/>
    <property type="match status" value="1"/>
</dbReference>
<dbReference type="PROSITE" id="PS01319">
    <property type="entry name" value="RBFA"/>
    <property type="match status" value="1"/>
</dbReference>
<keyword id="KW-0963">Cytoplasm</keyword>
<keyword id="KW-1185">Reference proteome</keyword>
<keyword id="KW-0690">Ribosome biogenesis</keyword>
<accession>A4X4N9</accession>
<reference key="1">
    <citation type="journal article" date="2007" name="Proc. Natl. Acad. Sci. U.S.A.">
        <title>Genome sequencing reveals complex secondary metabolome in the marine actinomycete Salinispora tropica.</title>
        <authorList>
            <person name="Udwary D.W."/>
            <person name="Zeigler L."/>
            <person name="Asolkar R.N."/>
            <person name="Singan V."/>
            <person name="Lapidus A."/>
            <person name="Fenical W."/>
            <person name="Jensen P.R."/>
            <person name="Moore B.S."/>
        </authorList>
    </citation>
    <scope>NUCLEOTIDE SEQUENCE [LARGE SCALE GENOMIC DNA]</scope>
    <source>
        <strain>ATCC BAA-916 / DSM 44818 / JCM 13857 / NBRC 105044 / CNB-440</strain>
    </source>
</reference>
<organism>
    <name type="scientific">Salinispora tropica (strain ATCC BAA-916 / DSM 44818 / JCM 13857 / NBRC 105044 / CNB-440)</name>
    <dbReference type="NCBI Taxonomy" id="369723"/>
    <lineage>
        <taxon>Bacteria</taxon>
        <taxon>Bacillati</taxon>
        <taxon>Actinomycetota</taxon>
        <taxon>Actinomycetes</taxon>
        <taxon>Micromonosporales</taxon>
        <taxon>Micromonosporaceae</taxon>
        <taxon>Salinispora</taxon>
    </lineage>
</organism>
<name>RBFA_SALTO</name>
<feature type="chain" id="PRO_1000073778" description="Ribosome-binding factor A">
    <location>
        <begin position="1"/>
        <end position="156"/>
    </location>
</feature>
<feature type="region of interest" description="Disordered" evidence="2">
    <location>
        <begin position="124"/>
        <end position="156"/>
    </location>
</feature>
<evidence type="ECO:0000255" key="1">
    <source>
        <dbReference type="HAMAP-Rule" id="MF_00003"/>
    </source>
</evidence>
<evidence type="ECO:0000256" key="2">
    <source>
        <dbReference type="SAM" id="MobiDB-lite"/>
    </source>
</evidence>